<comment type="function">
    <text evidence="1">Catalyzes the conversion of urocanate to 4-imidazolone-5-propionate.</text>
</comment>
<comment type="catalytic activity">
    <reaction evidence="1">
        <text>4-imidazolone-5-propanoate = trans-urocanate + H2O</text>
        <dbReference type="Rhea" id="RHEA:13101"/>
        <dbReference type="ChEBI" id="CHEBI:15377"/>
        <dbReference type="ChEBI" id="CHEBI:17771"/>
        <dbReference type="ChEBI" id="CHEBI:77893"/>
        <dbReference type="EC" id="4.2.1.49"/>
    </reaction>
</comment>
<comment type="cofactor">
    <cofactor evidence="1">
        <name>NAD(+)</name>
        <dbReference type="ChEBI" id="CHEBI:57540"/>
    </cofactor>
    <text evidence="1">Binds 1 NAD(+) per subunit.</text>
</comment>
<comment type="pathway">
    <text evidence="1">Amino-acid degradation; L-histidine degradation into L-glutamate; N-formimidoyl-L-glutamate from L-histidine: step 2/3.</text>
</comment>
<comment type="subcellular location">
    <subcellularLocation>
        <location evidence="1">Cytoplasm</location>
    </subcellularLocation>
</comment>
<comment type="similarity">
    <text evidence="1">Belongs to the urocanase family.</text>
</comment>
<name>HUTU_HAHCH</name>
<organism>
    <name type="scientific">Hahella chejuensis (strain KCTC 2396)</name>
    <dbReference type="NCBI Taxonomy" id="349521"/>
    <lineage>
        <taxon>Bacteria</taxon>
        <taxon>Pseudomonadati</taxon>
        <taxon>Pseudomonadota</taxon>
        <taxon>Gammaproteobacteria</taxon>
        <taxon>Oceanospirillales</taxon>
        <taxon>Hahellaceae</taxon>
        <taxon>Hahella</taxon>
    </lineage>
</organism>
<protein>
    <recommendedName>
        <fullName evidence="1">Urocanate hydratase</fullName>
        <shortName evidence="1">Urocanase</shortName>
        <ecNumber evidence="1">4.2.1.49</ecNumber>
    </recommendedName>
    <alternativeName>
        <fullName evidence="1">Imidazolonepropionate hydrolase</fullName>
    </alternativeName>
</protein>
<dbReference type="EC" id="4.2.1.49" evidence="1"/>
<dbReference type="EMBL" id="CP000155">
    <property type="protein sequence ID" value="ABC30878.1"/>
    <property type="molecule type" value="Genomic_DNA"/>
</dbReference>
<dbReference type="RefSeq" id="WP_011397945.1">
    <property type="nucleotide sequence ID" value="NC_007645.1"/>
</dbReference>
<dbReference type="SMR" id="Q2SEP6"/>
<dbReference type="STRING" id="349521.HCH_04171"/>
<dbReference type="KEGG" id="hch:HCH_04171"/>
<dbReference type="eggNOG" id="COG2987">
    <property type="taxonomic scope" value="Bacteria"/>
</dbReference>
<dbReference type="HOGENOM" id="CLU_018868_0_1_6"/>
<dbReference type="OrthoDB" id="9764874at2"/>
<dbReference type="UniPathway" id="UPA00379">
    <property type="reaction ID" value="UER00550"/>
</dbReference>
<dbReference type="Proteomes" id="UP000000238">
    <property type="component" value="Chromosome"/>
</dbReference>
<dbReference type="GO" id="GO:0005737">
    <property type="term" value="C:cytoplasm"/>
    <property type="evidence" value="ECO:0007669"/>
    <property type="project" value="UniProtKB-SubCell"/>
</dbReference>
<dbReference type="GO" id="GO:0016153">
    <property type="term" value="F:urocanate hydratase activity"/>
    <property type="evidence" value="ECO:0007669"/>
    <property type="project" value="UniProtKB-UniRule"/>
</dbReference>
<dbReference type="GO" id="GO:0019556">
    <property type="term" value="P:L-histidine catabolic process to glutamate and formamide"/>
    <property type="evidence" value="ECO:0007669"/>
    <property type="project" value="UniProtKB-UniPathway"/>
</dbReference>
<dbReference type="GO" id="GO:0019557">
    <property type="term" value="P:L-histidine catabolic process to glutamate and formate"/>
    <property type="evidence" value="ECO:0007669"/>
    <property type="project" value="UniProtKB-UniPathway"/>
</dbReference>
<dbReference type="FunFam" id="3.40.50.10730:FF:000001">
    <property type="entry name" value="Urocanate hydratase"/>
    <property type="match status" value="1"/>
</dbReference>
<dbReference type="Gene3D" id="3.40.50.10730">
    <property type="entry name" value="Urocanase like domains"/>
    <property type="match status" value="1"/>
</dbReference>
<dbReference type="Gene3D" id="3.40.1770.10">
    <property type="entry name" value="Urocanase superfamily"/>
    <property type="match status" value="1"/>
</dbReference>
<dbReference type="HAMAP" id="MF_00577">
    <property type="entry name" value="HutU"/>
    <property type="match status" value="1"/>
</dbReference>
<dbReference type="InterPro" id="IPR055351">
    <property type="entry name" value="Urocanase"/>
</dbReference>
<dbReference type="InterPro" id="IPR023637">
    <property type="entry name" value="Urocanase-like"/>
</dbReference>
<dbReference type="InterPro" id="IPR035401">
    <property type="entry name" value="Urocanase_C"/>
</dbReference>
<dbReference type="InterPro" id="IPR038364">
    <property type="entry name" value="Urocanase_central_sf"/>
</dbReference>
<dbReference type="InterPro" id="IPR023636">
    <property type="entry name" value="Urocanase_CS"/>
</dbReference>
<dbReference type="InterPro" id="IPR035400">
    <property type="entry name" value="Urocanase_N"/>
</dbReference>
<dbReference type="InterPro" id="IPR035085">
    <property type="entry name" value="Urocanase_Rossmann-like"/>
</dbReference>
<dbReference type="InterPro" id="IPR036190">
    <property type="entry name" value="Urocanase_sf"/>
</dbReference>
<dbReference type="NCBIfam" id="TIGR01228">
    <property type="entry name" value="hutU"/>
    <property type="match status" value="1"/>
</dbReference>
<dbReference type="NCBIfam" id="NF003820">
    <property type="entry name" value="PRK05414.1"/>
    <property type="match status" value="1"/>
</dbReference>
<dbReference type="PANTHER" id="PTHR12216">
    <property type="entry name" value="UROCANATE HYDRATASE"/>
    <property type="match status" value="1"/>
</dbReference>
<dbReference type="PANTHER" id="PTHR12216:SF4">
    <property type="entry name" value="UROCANATE HYDRATASE"/>
    <property type="match status" value="1"/>
</dbReference>
<dbReference type="Pfam" id="PF01175">
    <property type="entry name" value="Urocanase"/>
    <property type="match status" value="1"/>
</dbReference>
<dbReference type="Pfam" id="PF17392">
    <property type="entry name" value="Urocanase_C"/>
    <property type="match status" value="1"/>
</dbReference>
<dbReference type="Pfam" id="PF17391">
    <property type="entry name" value="Urocanase_N"/>
    <property type="match status" value="1"/>
</dbReference>
<dbReference type="PIRSF" id="PIRSF001423">
    <property type="entry name" value="Urocanate_hydrat"/>
    <property type="match status" value="1"/>
</dbReference>
<dbReference type="SUPFAM" id="SSF111326">
    <property type="entry name" value="Urocanase"/>
    <property type="match status" value="1"/>
</dbReference>
<dbReference type="PROSITE" id="PS01233">
    <property type="entry name" value="UROCANASE"/>
    <property type="match status" value="1"/>
</dbReference>
<sequence>MKDPRHDDQREIRAPRGSELNAKSWLTEAPLRMLMNNLDPEVAEHPKSLVVYGGIGRAARDWECFDKIVEVLKRLEDDETLLVQSGKPVGVFKTHADAPRVLIANSNLVPHWANWEHFNELDKKGLMMYGQMTAGSWIYIGSQGIVQGTYETFVSVAKQHFNGEAHGRWILTGGLGGMGGAQPLAATMAGFCMLAVDCDPSRIEFRLRTRYLDKQAKDLDDALAMIENAKKTGEAISIGLLGNAADVYAELVKRGVTPDVVTDQTSAHDPLNGYLPQGWTMEHAAEMRLKDPAAVVKAAKQSMAVQVQAMLALQEAGAATLDYGNNIRQMALEEGVKNAFDFPGFVPAYIRPLFCEGVGPFRWAALSGDPEDIYKTDAKVKELIPDNPHLHNWLDMARERISFQGLPARICWVGLKDRARLGLAFNEMVRNGELKAPVVIGRDHLDSGSVASPNRETESMMDGSDAVSDWPLLNAMLNVAGGATWVSLHHGGGVGMGFSQHSGVVIVCDGSEAADQRIARVLRNDPGTGVMRHADAGYDIARNCAKENGLDLPMLKD</sequence>
<accession>Q2SEP6</accession>
<keyword id="KW-0963">Cytoplasm</keyword>
<keyword id="KW-0369">Histidine metabolism</keyword>
<keyword id="KW-0456">Lyase</keyword>
<keyword id="KW-0520">NAD</keyword>
<keyword id="KW-1185">Reference proteome</keyword>
<reference key="1">
    <citation type="journal article" date="2005" name="Nucleic Acids Res.">
        <title>Genomic blueprint of Hahella chejuensis, a marine microbe producing an algicidal agent.</title>
        <authorList>
            <person name="Jeong H."/>
            <person name="Yim J.H."/>
            <person name="Lee C."/>
            <person name="Choi S.-H."/>
            <person name="Park Y.K."/>
            <person name="Yoon S.H."/>
            <person name="Hur C.-G."/>
            <person name="Kang H.-Y."/>
            <person name="Kim D."/>
            <person name="Lee H.H."/>
            <person name="Park K.H."/>
            <person name="Park S.-H."/>
            <person name="Park H.-S."/>
            <person name="Lee H.K."/>
            <person name="Oh T.K."/>
            <person name="Kim J.F."/>
        </authorList>
    </citation>
    <scope>NUCLEOTIDE SEQUENCE [LARGE SCALE GENOMIC DNA]</scope>
    <source>
        <strain>KCTC 2396</strain>
    </source>
</reference>
<gene>
    <name evidence="1" type="primary">hutU</name>
    <name type="ordered locus">HCH_04171</name>
</gene>
<feature type="chain" id="PRO_1000025129" description="Urocanate hydratase">
    <location>
        <begin position="1"/>
        <end position="557"/>
    </location>
</feature>
<feature type="active site" evidence="1">
    <location>
        <position position="411"/>
    </location>
</feature>
<feature type="binding site" evidence="1">
    <location>
        <begin position="53"/>
        <end position="54"/>
    </location>
    <ligand>
        <name>NAD(+)</name>
        <dbReference type="ChEBI" id="CHEBI:57540"/>
    </ligand>
</feature>
<feature type="binding site" evidence="1">
    <location>
        <position position="131"/>
    </location>
    <ligand>
        <name>NAD(+)</name>
        <dbReference type="ChEBI" id="CHEBI:57540"/>
    </ligand>
</feature>
<feature type="binding site" evidence="1">
    <location>
        <begin position="177"/>
        <end position="179"/>
    </location>
    <ligand>
        <name>NAD(+)</name>
        <dbReference type="ChEBI" id="CHEBI:57540"/>
    </ligand>
</feature>
<feature type="binding site" evidence="1">
    <location>
        <position position="197"/>
    </location>
    <ligand>
        <name>NAD(+)</name>
        <dbReference type="ChEBI" id="CHEBI:57540"/>
    </ligand>
</feature>
<feature type="binding site" evidence="1">
    <location>
        <position position="202"/>
    </location>
    <ligand>
        <name>NAD(+)</name>
        <dbReference type="ChEBI" id="CHEBI:57540"/>
    </ligand>
</feature>
<feature type="binding site" evidence="1">
    <location>
        <begin position="243"/>
        <end position="244"/>
    </location>
    <ligand>
        <name>NAD(+)</name>
        <dbReference type="ChEBI" id="CHEBI:57540"/>
    </ligand>
</feature>
<feature type="binding site" evidence="1">
    <location>
        <begin position="264"/>
        <end position="268"/>
    </location>
    <ligand>
        <name>NAD(+)</name>
        <dbReference type="ChEBI" id="CHEBI:57540"/>
    </ligand>
</feature>
<feature type="binding site" evidence="1">
    <location>
        <begin position="274"/>
        <end position="275"/>
    </location>
    <ligand>
        <name>NAD(+)</name>
        <dbReference type="ChEBI" id="CHEBI:57540"/>
    </ligand>
</feature>
<feature type="binding site" evidence="1">
    <location>
        <position position="323"/>
    </location>
    <ligand>
        <name>NAD(+)</name>
        <dbReference type="ChEBI" id="CHEBI:57540"/>
    </ligand>
</feature>
<feature type="binding site" evidence="1">
    <location>
        <position position="493"/>
    </location>
    <ligand>
        <name>NAD(+)</name>
        <dbReference type="ChEBI" id="CHEBI:57540"/>
    </ligand>
</feature>
<evidence type="ECO:0000255" key="1">
    <source>
        <dbReference type="HAMAP-Rule" id="MF_00577"/>
    </source>
</evidence>
<proteinExistence type="inferred from homology"/>